<organism>
    <name type="scientific">Exiguobacterium sibiricum (strain DSM 17290 / CCUG 55495 / CIP 109462 / JCM 13490 / 255-15)</name>
    <dbReference type="NCBI Taxonomy" id="262543"/>
    <lineage>
        <taxon>Bacteria</taxon>
        <taxon>Bacillati</taxon>
        <taxon>Bacillota</taxon>
        <taxon>Bacilli</taxon>
        <taxon>Bacillales</taxon>
        <taxon>Bacillales Family XII. Incertae Sedis</taxon>
        <taxon>Exiguobacterium</taxon>
    </lineage>
</organism>
<accession>B1YL27</accession>
<dbReference type="EMBL" id="CP001022">
    <property type="protein sequence ID" value="ACB61829.1"/>
    <property type="molecule type" value="Genomic_DNA"/>
</dbReference>
<dbReference type="RefSeq" id="WP_012371245.1">
    <property type="nucleotide sequence ID" value="NC_010556.1"/>
</dbReference>
<dbReference type="SMR" id="B1YL27"/>
<dbReference type="STRING" id="262543.Exig_2379"/>
<dbReference type="KEGG" id="esi:Exig_2379"/>
<dbReference type="eggNOG" id="COG0691">
    <property type="taxonomic scope" value="Bacteria"/>
</dbReference>
<dbReference type="HOGENOM" id="CLU_108953_0_1_9"/>
<dbReference type="OrthoDB" id="9805462at2"/>
<dbReference type="Proteomes" id="UP000001681">
    <property type="component" value="Chromosome"/>
</dbReference>
<dbReference type="GO" id="GO:0005829">
    <property type="term" value="C:cytosol"/>
    <property type="evidence" value="ECO:0007669"/>
    <property type="project" value="TreeGrafter"/>
</dbReference>
<dbReference type="GO" id="GO:0003723">
    <property type="term" value="F:RNA binding"/>
    <property type="evidence" value="ECO:0007669"/>
    <property type="project" value="UniProtKB-UniRule"/>
</dbReference>
<dbReference type="GO" id="GO:0070929">
    <property type="term" value="P:trans-translation"/>
    <property type="evidence" value="ECO:0007669"/>
    <property type="project" value="UniProtKB-UniRule"/>
</dbReference>
<dbReference type="CDD" id="cd09294">
    <property type="entry name" value="SmpB"/>
    <property type="match status" value="1"/>
</dbReference>
<dbReference type="Gene3D" id="2.40.280.10">
    <property type="match status" value="1"/>
</dbReference>
<dbReference type="HAMAP" id="MF_00023">
    <property type="entry name" value="SmpB"/>
    <property type="match status" value="1"/>
</dbReference>
<dbReference type="InterPro" id="IPR023620">
    <property type="entry name" value="SmpB"/>
</dbReference>
<dbReference type="InterPro" id="IPR000037">
    <property type="entry name" value="SsrA-bd_prot"/>
</dbReference>
<dbReference type="InterPro" id="IPR020081">
    <property type="entry name" value="SsrA-bd_prot_CS"/>
</dbReference>
<dbReference type="NCBIfam" id="NF003843">
    <property type="entry name" value="PRK05422.1"/>
    <property type="match status" value="1"/>
</dbReference>
<dbReference type="NCBIfam" id="TIGR00086">
    <property type="entry name" value="smpB"/>
    <property type="match status" value="1"/>
</dbReference>
<dbReference type="PANTHER" id="PTHR30308:SF2">
    <property type="entry name" value="SSRA-BINDING PROTEIN"/>
    <property type="match status" value="1"/>
</dbReference>
<dbReference type="PANTHER" id="PTHR30308">
    <property type="entry name" value="TMRNA-BINDING COMPONENT OF TRANS-TRANSLATION TAGGING COMPLEX"/>
    <property type="match status" value="1"/>
</dbReference>
<dbReference type="Pfam" id="PF01668">
    <property type="entry name" value="SmpB"/>
    <property type="match status" value="1"/>
</dbReference>
<dbReference type="SUPFAM" id="SSF74982">
    <property type="entry name" value="Small protein B (SmpB)"/>
    <property type="match status" value="1"/>
</dbReference>
<dbReference type="PROSITE" id="PS01317">
    <property type="entry name" value="SSRP"/>
    <property type="match status" value="1"/>
</dbReference>
<name>SSRP_EXIS2</name>
<reference key="1">
    <citation type="submission" date="2008-04" db="EMBL/GenBank/DDBJ databases">
        <title>Complete sequence of chromosome of Exiguobacterium sibiricum 255-15.</title>
        <authorList>
            <consortium name="US DOE Joint Genome Institute"/>
            <person name="Copeland A."/>
            <person name="Lucas S."/>
            <person name="Lapidus A."/>
            <person name="Glavina del Rio T."/>
            <person name="Dalin E."/>
            <person name="Tice H."/>
            <person name="Bruce D."/>
            <person name="Goodwin L."/>
            <person name="Pitluck S."/>
            <person name="Kiss H."/>
            <person name="Chertkov O."/>
            <person name="Monk C."/>
            <person name="Brettin T."/>
            <person name="Detter J.C."/>
            <person name="Han C."/>
            <person name="Kuske C.R."/>
            <person name="Schmutz J."/>
            <person name="Larimer F."/>
            <person name="Land M."/>
            <person name="Hauser L."/>
            <person name="Kyrpides N."/>
            <person name="Mikhailova N."/>
            <person name="Vishnivetskaya T."/>
            <person name="Rodrigues D.F."/>
            <person name="Gilichinsky D."/>
            <person name="Tiedje J."/>
            <person name="Richardson P."/>
        </authorList>
    </citation>
    <scope>NUCLEOTIDE SEQUENCE [LARGE SCALE GENOMIC DNA]</scope>
    <source>
        <strain>DSM 17290 / CCUG 55495 / CIP 109462 / JCM 13490 / 255-15</strain>
    </source>
</reference>
<proteinExistence type="inferred from homology"/>
<sequence>MPKGTSSKVLANNKRASFDYAIEDTIEAGLVLTGTEIKSVRKGKISIGDAFVRFDGGEAILWNSNIAHFEQGNRYNHEQLRPRKLLLHKKQIATLMGSVSRDGYTIVPLKIYIKNGYAKCLIGLGRGKKKFDKRDDLKKKDAKRDIDRALRDKQKY</sequence>
<feature type="chain" id="PRO_1000090151" description="SsrA-binding protein">
    <location>
        <begin position="1"/>
        <end position="156"/>
    </location>
</feature>
<feature type="region of interest" description="Disordered" evidence="2">
    <location>
        <begin position="130"/>
        <end position="156"/>
    </location>
</feature>
<feature type="compositionally biased region" description="Basic and acidic residues" evidence="2">
    <location>
        <begin position="132"/>
        <end position="156"/>
    </location>
</feature>
<evidence type="ECO:0000255" key="1">
    <source>
        <dbReference type="HAMAP-Rule" id="MF_00023"/>
    </source>
</evidence>
<evidence type="ECO:0000256" key="2">
    <source>
        <dbReference type="SAM" id="MobiDB-lite"/>
    </source>
</evidence>
<keyword id="KW-0963">Cytoplasm</keyword>
<keyword id="KW-1185">Reference proteome</keyword>
<keyword id="KW-0694">RNA-binding</keyword>
<comment type="function">
    <text evidence="1">Required for rescue of stalled ribosomes mediated by trans-translation. Binds to transfer-messenger RNA (tmRNA), required for stable association of tmRNA with ribosomes. tmRNA and SmpB together mimic tRNA shape, replacing the anticodon stem-loop with SmpB. tmRNA is encoded by the ssrA gene; the 2 termini fold to resemble tRNA(Ala) and it encodes a 'tag peptide', a short internal open reading frame. During trans-translation Ala-aminoacylated tmRNA acts like a tRNA, entering the A-site of stalled ribosomes, displacing the stalled mRNA. The ribosome then switches to translate the ORF on the tmRNA; the nascent peptide is terminated with the 'tag peptide' encoded by the tmRNA and targeted for degradation. The ribosome is freed to recommence translation, which seems to be the essential function of trans-translation.</text>
</comment>
<comment type="subcellular location">
    <subcellularLocation>
        <location evidence="1">Cytoplasm</location>
    </subcellularLocation>
    <text evidence="1">The tmRNA-SmpB complex associates with stalled 70S ribosomes.</text>
</comment>
<comment type="similarity">
    <text evidence="1">Belongs to the SmpB family.</text>
</comment>
<gene>
    <name evidence="1" type="primary">smpB</name>
    <name type="ordered locus">Exig_2379</name>
</gene>
<protein>
    <recommendedName>
        <fullName evidence="1">SsrA-binding protein</fullName>
    </recommendedName>
    <alternativeName>
        <fullName evidence="1">Small protein B</fullName>
    </alternativeName>
</protein>